<evidence type="ECO:0000255" key="1">
    <source>
        <dbReference type="HAMAP-Rule" id="MF_00487"/>
    </source>
</evidence>
<feature type="chain" id="PRO_0000113453" description="Malate dehydrogenase">
    <location>
        <begin position="1"/>
        <end position="317"/>
    </location>
</feature>
<feature type="active site" description="Proton acceptor" evidence="1">
    <location>
        <position position="176"/>
    </location>
</feature>
<feature type="binding site" evidence="1">
    <location>
        <begin position="10"/>
        <end position="15"/>
    </location>
    <ligand>
        <name>NAD(+)</name>
        <dbReference type="ChEBI" id="CHEBI:57540"/>
    </ligand>
</feature>
<feature type="binding site" evidence="1">
    <location>
        <position position="34"/>
    </location>
    <ligand>
        <name>NAD(+)</name>
        <dbReference type="ChEBI" id="CHEBI:57540"/>
    </ligand>
</feature>
<feature type="binding site" evidence="1">
    <location>
        <position position="83"/>
    </location>
    <ligand>
        <name>substrate</name>
    </ligand>
</feature>
<feature type="binding site" evidence="1">
    <location>
        <position position="89"/>
    </location>
    <ligand>
        <name>substrate</name>
    </ligand>
</feature>
<feature type="binding site" evidence="1">
    <location>
        <position position="96"/>
    </location>
    <ligand>
        <name>NAD(+)</name>
        <dbReference type="ChEBI" id="CHEBI:57540"/>
    </ligand>
</feature>
<feature type="binding site" evidence="1">
    <location>
        <begin position="119"/>
        <end position="121"/>
    </location>
    <ligand>
        <name>NAD(+)</name>
        <dbReference type="ChEBI" id="CHEBI:57540"/>
    </ligand>
</feature>
<feature type="binding site" evidence="1">
    <location>
        <position position="121"/>
    </location>
    <ligand>
        <name>substrate</name>
    </ligand>
</feature>
<feature type="binding site" evidence="1">
    <location>
        <position position="152"/>
    </location>
    <ligand>
        <name>substrate</name>
    </ligand>
</feature>
<accession>Q74D53</accession>
<gene>
    <name evidence="1" type="primary">mdh</name>
    <name type="ordered locus">GSU1466</name>
</gene>
<protein>
    <recommendedName>
        <fullName evidence="1">Malate dehydrogenase</fullName>
        <ecNumber evidence="1">1.1.1.37</ecNumber>
    </recommendedName>
</protein>
<reference key="1">
    <citation type="journal article" date="2003" name="Science">
        <title>Genome of Geobacter sulfurreducens: metal reduction in subsurface environments.</title>
        <authorList>
            <person name="Methe B.A."/>
            <person name="Nelson K.E."/>
            <person name="Eisen J.A."/>
            <person name="Paulsen I.T."/>
            <person name="Nelson W.C."/>
            <person name="Heidelberg J.F."/>
            <person name="Wu D."/>
            <person name="Wu M."/>
            <person name="Ward N.L."/>
            <person name="Beanan M.J."/>
            <person name="Dodson R.J."/>
            <person name="Madupu R."/>
            <person name="Brinkac L.M."/>
            <person name="Daugherty S.C."/>
            <person name="DeBoy R.T."/>
            <person name="Durkin A.S."/>
            <person name="Gwinn M.L."/>
            <person name="Kolonay J.F."/>
            <person name="Sullivan S.A."/>
            <person name="Haft D.H."/>
            <person name="Selengut J."/>
            <person name="Davidsen T.M."/>
            <person name="Zafar N."/>
            <person name="White O."/>
            <person name="Tran B."/>
            <person name="Romero C."/>
            <person name="Forberger H.A."/>
            <person name="Weidman J.F."/>
            <person name="Khouri H.M."/>
            <person name="Feldblyum T.V."/>
            <person name="Utterback T.R."/>
            <person name="Van Aken S.E."/>
            <person name="Lovley D.R."/>
            <person name="Fraser C.M."/>
        </authorList>
    </citation>
    <scope>NUCLEOTIDE SEQUENCE [LARGE SCALE GENOMIC DNA]</scope>
    <source>
        <strain>ATCC 51573 / DSM 12127 / PCA</strain>
    </source>
</reference>
<dbReference type="EC" id="1.1.1.37" evidence="1"/>
<dbReference type="EMBL" id="AE017180">
    <property type="protein sequence ID" value="AAR34840.1"/>
    <property type="molecule type" value="Genomic_DNA"/>
</dbReference>
<dbReference type="RefSeq" id="NP_952517.1">
    <property type="nucleotide sequence ID" value="NC_002939.5"/>
</dbReference>
<dbReference type="RefSeq" id="WP_010942112.1">
    <property type="nucleotide sequence ID" value="NC_002939.5"/>
</dbReference>
<dbReference type="SMR" id="Q74D53"/>
<dbReference type="FunCoup" id="Q74D53">
    <property type="interactions" value="502"/>
</dbReference>
<dbReference type="STRING" id="243231.GSU1466"/>
<dbReference type="EnsemblBacteria" id="AAR34840">
    <property type="protein sequence ID" value="AAR34840"/>
    <property type="gene ID" value="GSU1466"/>
</dbReference>
<dbReference type="KEGG" id="gsu:GSU1466"/>
<dbReference type="PATRIC" id="fig|243231.5.peg.1512"/>
<dbReference type="eggNOG" id="COG0039">
    <property type="taxonomic scope" value="Bacteria"/>
</dbReference>
<dbReference type="HOGENOM" id="CLU_045401_2_1_7"/>
<dbReference type="InParanoid" id="Q74D53"/>
<dbReference type="OrthoDB" id="9802969at2"/>
<dbReference type="Proteomes" id="UP000000577">
    <property type="component" value="Chromosome"/>
</dbReference>
<dbReference type="GO" id="GO:0005737">
    <property type="term" value="C:cytoplasm"/>
    <property type="evidence" value="ECO:0000318"/>
    <property type="project" value="GO_Central"/>
</dbReference>
<dbReference type="GO" id="GO:0030060">
    <property type="term" value="F:L-malate dehydrogenase (NAD+) activity"/>
    <property type="evidence" value="ECO:0000318"/>
    <property type="project" value="GO_Central"/>
</dbReference>
<dbReference type="GO" id="GO:0019752">
    <property type="term" value="P:carboxylic acid metabolic process"/>
    <property type="evidence" value="ECO:0007669"/>
    <property type="project" value="InterPro"/>
</dbReference>
<dbReference type="GO" id="GO:0006099">
    <property type="term" value="P:tricarboxylic acid cycle"/>
    <property type="evidence" value="ECO:0007669"/>
    <property type="project" value="UniProtKB-UniRule"/>
</dbReference>
<dbReference type="CDD" id="cd01339">
    <property type="entry name" value="LDH-like_MDH"/>
    <property type="match status" value="1"/>
</dbReference>
<dbReference type="FunFam" id="3.40.50.720:FF:000018">
    <property type="entry name" value="Malate dehydrogenase"/>
    <property type="match status" value="1"/>
</dbReference>
<dbReference type="FunFam" id="3.90.110.10:FF:000004">
    <property type="entry name" value="Malate dehydrogenase"/>
    <property type="match status" value="1"/>
</dbReference>
<dbReference type="Gene3D" id="3.90.110.10">
    <property type="entry name" value="Lactate dehydrogenase/glycoside hydrolase, family 4, C-terminal"/>
    <property type="match status" value="1"/>
</dbReference>
<dbReference type="Gene3D" id="3.40.50.720">
    <property type="entry name" value="NAD(P)-binding Rossmann-like Domain"/>
    <property type="match status" value="1"/>
</dbReference>
<dbReference type="HAMAP" id="MF_00487">
    <property type="entry name" value="Malate_dehydrog_3"/>
    <property type="match status" value="1"/>
</dbReference>
<dbReference type="InterPro" id="IPR001557">
    <property type="entry name" value="L-lactate/malate_DH"/>
</dbReference>
<dbReference type="InterPro" id="IPR022383">
    <property type="entry name" value="Lactate/malate_DH_C"/>
</dbReference>
<dbReference type="InterPro" id="IPR001236">
    <property type="entry name" value="Lactate/malate_DH_N"/>
</dbReference>
<dbReference type="InterPro" id="IPR015955">
    <property type="entry name" value="Lactate_DH/Glyco_Ohase_4_C"/>
</dbReference>
<dbReference type="InterPro" id="IPR011275">
    <property type="entry name" value="Malate_DH_type3"/>
</dbReference>
<dbReference type="InterPro" id="IPR036291">
    <property type="entry name" value="NAD(P)-bd_dom_sf"/>
</dbReference>
<dbReference type="NCBIfam" id="TIGR01763">
    <property type="entry name" value="MalateDH_bact"/>
    <property type="match status" value="1"/>
</dbReference>
<dbReference type="NCBIfam" id="NF004863">
    <property type="entry name" value="PRK06223.1"/>
    <property type="match status" value="1"/>
</dbReference>
<dbReference type="PANTHER" id="PTHR43128">
    <property type="entry name" value="L-2-HYDROXYCARBOXYLATE DEHYDROGENASE (NAD(P)(+))"/>
    <property type="match status" value="1"/>
</dbReference>
<dbReference type="PANTHER" id="PTHR43128:SF16">
    <property type="entry name" value="L-LACTATE DEHYDROGENASE"/>
    <property type="match status" value="1"/>
</dbReference>
<dbReference type="Pfam" id="PF02866">
    <property type="entry name" value="Ldh_1_C"/>
    <property type="match status" value="1"/>
</dbReference>
<dbReference type="Pfam" id="PF00056">
    <property type="entry name" value="Ldh_1_N"/>
    <property type="match status" value="1"/>
</dbReference>
<dbReference type="PIRSF" id="PIRSF000102">
    <property type="entry name" value="Lac_mal_DH"/>
    <property type="match status" value="1"/>
</dbReference>
<dbReference type="PRINTS" id="PR00086">
    <property type="entry name" value="LLDHDRGNASE"/>
</dbReference>
<dbReference type="SUPFAM" id="SSF56327">
    <property type="entry name" value="LDH C-terminal domain-like"/>
    <property type="match status" value="1"/>
</dbReference>
<dbReference type="SUPFAM" id="SSF51735">
    <property type="entry name" value="NAD(P)-binding Rossmann-fold domains"/>
    <property type="match status" value="1"/>
</dbReference>
<comment type="function">
    <text evidence="1">Catalyzes the reversible oxidation of malate to oxaloacetate.</text>
</comment>
<comment type="catalytic activity">
    <reaction evidence="1">
        <text>(S)-malate + NAD(+) = oxaloacetate + NADH + H(+)</text>
        <dbReference type="Rhea" id="RHEA:21432"/>
        <dbReference type="ChEBI" id="CHEBI:15378"/>
        <dbReference type="ChEBI" id="CHEBI:15589"/>
        <dbReference type="ChEBI" id="CHEBI:16452"/>
        <dbReference type="ChEBI" id="CHEBI:57540"/>
        <dbReference type="ChEBI" id="CHEBI:57945"/>
        <dbReference type="EC" id="1.1.1.37"/>
    </reaction>
</comment>
<comment type="similarity">
    <text evidence="1">Belongs to the LDH/MDH superfamily. MDH type 3 family.</text>
</comment>
<proteinExistence type="inferred from homology"/>
<name>MDH_GEOSL</name>
<keyword id="KW-0520">NAD</keyword>
<keyword id="KW-0560">Oxidoreductase</keyword>
<keyword id="KW-1185">Reference proteome</keyword>
<keyword id="KW-0816">Tricarboxylic acid cycle</keyword>
<sequence>MARKKIALIGGGQIGGVLAQLCALRELGDVVLFDIVEGLPQGKCLDIAEASPVDGFDVCLKGTNSYEDIAGADVVIVTAGLPRKPGMSRDDLIEVNSKIMTSVAEGIKQYAPNSFVIVISNPLDAMVTLCQKVTGFPYNRVIGQAGVLDSARFATFIAWELGVSVKDVTAMTLGGHGDDMVPLVRYASVKGIPVMELLERKYGSKEKAKEVMDAMVNRTRLAGGEVVALLKTGSAFYSPASSAIAMAESILKDQKRVLPTCAYLQGEFGVNGYYVGVPCVLGEKGIENIIEFSLDAEEQAMMDKSVAAVKSLVDSLK</sequence>
<organism>
    <name type="scientific">Geobacter sulfurreducens (strain ATCC 51573 / DSM 12127 / PCA)</name>
    <dbReference type="NCBI Taxonomy" id="243231"/>
    <lineage>
        <taxon>Bacteria</taxon>
        <taxon>Pseudomonadati</taxon>
        <taxon>Thermodesulfobacteriota</taxon>
        <taxon>Desulfuromonadia</taxon>
        <taxon>Geobacterales</taxon>
        <taxon>Geobacteraceae</taxon>
        <taxon>Geobacter</taxon>
    </lineage>
</organism>